<gene>
    <name type="ordered locus">CT_309</name>
</gene>
<dbReference type="EMBL" id="AE001273">
    <property type="protein sequence ID" value="AAC67902.1"/>
    <property type="molecule type" value="Genomic_DNA"/>
</dbReference>
<dbReference type="PIR" id="C71531">
    <property type="entry name" value="C71531"/>
</dbReference>
<dbReference type="RefSeq" id="NP_219814.1">
    <property type="nucleotide sequence ID" value="NC_000117.1"/>
</dbReference>
<dbReference type="RefSeq" id="WP_009871656.1">
    <property type="nucleotide sequence ID" value="NC_000117.1"/>
</dbReference>
<dbReference type="STRING" id="272561.CT_309"/>
<dbReference type="EnsemblBacteria" id="AAC67902">
    <property type="protein sequence ID" value="AAC67902"/>
    <property type="gene ID" value="CT_309"/>
</dbReference>
<dbReference type="GeneID" id="884814"/>
<dbReference type="KEGG" id="ctr:CT_309"/>
<dbReference type="PATRIC" id="fig|272561.5.peg.330"/>
<dbReference type="HOGENOM" id="CLU_091270_0_0_0"/>
<dbReference type="InParanoid" id="O84311"/>
<dbReference type="OrthoDB" id="17717at2"/>
<dbReference type="Proteomes" id="UP000000431">
    <property type="component" value="Chromosome"/>
</dbReference>
<dbReference type="InterPro" id="IPR024492">
    <property type="entry name" value="DUF2764"/>
</dbReference>
<dbReference type="Pfam" id="PF10962">
    <property type="entry name" value="DUF2764"/>
    <property type="match status" value="1"/>
</dbReference>
<accession>O84311</accession>
<feature type="chain" id="PRO_0000218356" description="Uncharacterized protein CT_309">
    <location>
        <begin position="1"/>
        <end position="266"/>
    </location>
</feature>
<organism>
    <name type="scientific">Chlamydia trachomatis serovar D (strain ATCC VR-885 / DSM 19411 / UW-3/Cx)</name>
    <dbReference type="NCBI Taxonomy" id="272561"/>
    <lineage>
        <taxon>Bacteria</taxon>
        <taxon>Pseudomonadati</taxon>
        <taxon>Chlamydiota</taxon>
        <taxon>Chlamydiia</taxon>
        <taxon>Chlamydiales</taxon>
        <taxon>Chlamydiaceae</taxon>
        <taxon>Chlamydia/Chlamydophila group</taxon>
        <taxon>Chlamydia</taxon>
    </lineage>
</organism>
<sequence length="266" mass="32016">MNQCYFLSSFLSPQQPESPPLYSFQEINDLLALNFTDKDWQSYVILRRFFDLENFAFFWAGKSIPFSFGTITNSNVESLLRLQMWSDEWEFEDFFKDFLLRYKTPQERLTHFSELVRDFLDHYQDYPSEFLRTYFRFKQDLRIILAGFRARVMQKDVSFVLRDEDSSNPIVLHVLMQKDSPNYELPDEFFELRDVLGDYGRLPHMLNQTLSFYEFHKVEEMSRDKYLNTDAILSRLTTYLMAIRSSWASVQKGKELINLMEKGIRW</sequence>
<name>Y309_CHLTR</name>
<comment type="similarity">
    <text evidence="1">Belongs to the chlamydial CPn_0087/CT_309/TC_0583 family.</text>
</comment>
<keyword id="KW-1185">Reference proteome</keyword>
<evidence type="ECO:0000305" key="1"/>
<reference key="1">
    <citation type="journal article" date="1998" name="Science">
        <title>Genome sequence of an obligate intracellular pathogen of humans: Chlamydia trachomatis.</title>
        <authorList>
            <person name="Stephens R.S."/>
            <person name="Kalman S."/>
            <person name="Lammel C.J."/>
            <person name="Fan J."/>
            <person name="Marathe R."/>
            <person name="Aravind L."/>
            <person name="Mitchell W.P."/>
            <person name="Olinger L."/>
            <person name="Tatusov R.L."/>
            <person name="Zhao Q."/>
            <person name="Koonin E.V."/>
            <person name="Davis R.W."/>
        </authorList>
    </citation>
    <scope>NUCLEOTIDE SEQUENCE [LARGE SCALE GENOMIC DNA]</scope>
    <source>
        <strain>ATCC VR-885 / DSM 19411 / UW-3/Cx</strain>
    </source>
</reference>
<protein>
    <recommendedName>
        <fullName>Uncharacterized protein CT_309</fullName>
    </recommendedName>
</protein>
<proteinExistence type="inferred from homology"/>